<accession>Q851S8</accession>
<accession>A0A0P0W1U1</accession>
<accession>A3ALR6</accession>
<accession>Q10EJ8</accession>
<organism>
    <name type="scientific">Oryza sativa subsp. japonica</name>
    <name type="common">Rice</name>
    <dbReference type="NCBI Taxonomy" id="39947"/>
    <lineage>
        <taxon>Eukaryota</taxon>
        <taxon>Viridiplantae</taxon>
        <taxon>Streptophyta</taxon>
        <taxon>Embryophyta</taxon>
        <taxon>Tracheophyta</taxon>
        <taxon>Spermatophyta</taxon>
        <taxon>Magnoliopsida</taxon>
        <taxon>Liliopsida</taxon>
        <taxon>Poales</taxon>
        <taxon>Poaceae</taxon>
        <taxon>BOP clade</taxon>
        <taxon>Oryzoideae</taxon>
        <taxon>Oryzeae</taxon>
        <taxon>Oryzinae</taxon>
        <taxon>Oryza</taxon>
        <taxon>Oryza sativa</taxon>
    </lineage>
</organism>
<reference key="1">
    <citation type="journal article" date="2005" name="Genome Res.">
        <title>Sequence, annotation, and analysis of synteny between rice chromosome 3 and diverged grass species.</title>
        <authorList>
            <consortium name="The rice chromosome 3 sequencing consortium"/>
            <person name="Buell C.R."/>
            <person name="Yuan Q."/>
            <person name="Ouyang S."/>
            <person name="Liu J."/>
            <person name="Zhu W."/>
            <person name="Wang A."/>
            <person name="Maiti R."/>
            <person name="Haas B."/>
            <person name="Wortman J."/>
            <person name="Pertea M."/>
            <person name="Jones K.M."/>
            <person name="Kim M."/>
            <person name="Overton L."/>
            <person name="Tsitrin T."/>
            <person name="Fadrosh D."/>
            <person name="Bera J."/>
            <person name="Weaver B."/>
            <person name="Jin S."/>
            <person name="Johri S."/>
            <person name="Reardon M."/>
            <person name="Webb K."/>
            <person name="Hill J."/>
            <person name="Moffat K."/>
            <person name="Tallon L."/>
            <person name="Van Aken S."/>
            <person name="Lewis M."/>
            <person name="Utterback T."/>
            <person name="Feldblyum T."/>
            <person name="Zismann V."/>
            <person name="Iobst S."/>
            <person name="Hsiao J."/>
            <person name="de Vazeille A.R."/>
            <person name="Salzberg S.L."/>
            <person name="White O."/>
            <person name="Fraser C.M."/>
            <person name="Yu Y."/>
            <person name="Kim H."/>
            <person name="Rambo T."/>
            <person name="Currie J."/>
            <person name="Collura K."/>
            <person name="Kernodle-Thompson S."/>
            <person name="Wei F."/>
            <person name="Kudrna K."/>
            <person name="Ammiraju J.S.S."/>
            <person name="Luo M."/>
            <person name="Goicoechea J.L."/>
            <person name="Wing R.A."/>
            <person name="Henry D."/>
            <person name="Oates R."/>
            <person name="Palmer M."/>
            <person name="Pries G."/>
            <person name="Saski C."/>
            <person name="Simmons J."/>
            <person name="Soderlund C."/>
            <person name="Nelson W."/>
            <person name="de la Bastide M."/>
            <person name="Spiegel L."/>
            <person name="Nascimento L."/>
            <person name="Huang E."/>
            <person name="Preston R."/>
            <person name="Zutavern T."/>
            <person name="Palmer L."/>
            <person name="O'Shaughnessy A."/>
            <person name="Dike S."/>
            <person name="McCombie W.R."/>
            <person name="Minx P."/>
            <person name="Cordum H."/>
            <person name="Wilson R."/>
            <person name="Jin W."/>
            <person name="Lee H.R."/>
            <person name="Jiang J."/>
            <person name="Jackson S."/>
        </authorList>
    </citation>
    <scope>NUCLEOTIDE SEQUENCE [LARGE SCALE GENOMIC DNA]</scope>
    <source>
        <strain>cv. Nipponbare</strain>
    </source>
</reference>
<reference key="2">
    <citation type="journal article" date="2005" name="Nature">
        <title>The map-based sequence of the rice genome.</title>
        <authorList>
            <consortium name="International rice genome sequencing project (IRGSP)"/>
        </authorList>
    </citation>
    <scope>NUCLEOTIDE SEQUENCE [LARGE SCALE GENOMIC DNA]</scope>
    <source>
        <strain>cv. Nipponbare</strain>
    </source>
</reference>
<reference key="3">
    <citation type="journal article" date="2008" name="Nucleic Acids Res.">
        <title>The rice annotation project database (RAP-DB): 2008 update.</title>
        <authorList>
            <consortium name="The rice annotation project (RAP)"/>
        </authorList>
    </citation>
    <scope>GENOME REANNOTATION</scope>
    <source>
        <strain>cv. Nipponbare</strain>
    </source>
</reference>
<reference key="4">
    <citation type="journal article" date="2013" name="Rice">
        <title>Improvement of the Oryza sativa Nipponbare reference genome using next generation sequence and optical map data.</title>
        <authorList>
            <person name="Kawahara Y."/>
            <person name="de la Bastide M."/>
            <person name="Hamilton J.P."/>
            <person name="Kanamori H."/>
            <person name="McCombie W.R."/>
            <person name="Ouyang S."/>
            <person name="Schwartz D.C."/>
            <person name="Tanaka T."/>
            <person name="Wu J."/>
            <person name="Zhou S."/>
            <person name="Childs K.L."/>
            <person name="Davidson R.M."/>
            <person name="Lin H."/>
            <person name="Quesada-Ocampo L."/>
            <person name="Vaillancourt B."/>
            <person name="Sakai H."/>
            <person name="Lee S.S."/>
            <person name="Kim J."/>
            <person name="Numa H."/>
            <person name="Itoh T."/>
            <person name="Buell C.R."/>
            <person name="Matsumoto T."/>
        </authorList>
    </citation>
    <scope>GENOME REANNOTATION</scope>
    <source>
        <strain>cv. Nipponbare</strain>
    </source>
</reference>
<reference key="5">
    <citation type="journal article" date="2005" name="PLoS Biol.">
        <title>The genomes of Oryza sativa: a history of duplications.</title>
        <authorList>
            <person name="Yu J."/>
            <person name="Wang J."/>
            <person name="Lin W."/>
            <person name="Li S."/>
            <person name="Li H."/>
            <person name="Zhou J."/>
            <person name="Ni P."/>
            <person name="Dong W."/>
            <person name="Hu S."/>
            <person name="Zeng C."/>
            <person name="Zhang J."/>
            <person name="Zhang Y."/>
            <person name="Li R."/>
            <person name="Xu Z."/>
            <person name="Li S."/>
            <person name="Li X."/>
            <person name="Zheng H."/>
            <person name="Cong L."/>
            <person name="Lin L."/>
            <person name="Yin J."/>
            <person name="Geng J."/>
            <person name="Li G."/>
            <person name="Shi J."/>
            <person name="Liu J."/>
            <person name="Lv H."/>
            <person name="Li J."/>
            <person name="Wang J."/>
            <person name="Deng Y."/>
            <person name="Ran L."/>
            <person name="Shi X."/>
            <person name="Wang X."/>
            <person name="Wu Q."/>
            <person name="Li C."/>
            <person name="Ren X."/>
            <person name="Wang J."/>
            <person name="Wang X."/>
            <person name="Li D."/>
            <person name="Liu D."/>
            <person name="Zhang X."/>
            <person name="Ji Z."/>
            <person name="Zhao W."/>
            <person name="Sun Y."/>
            <person name="Zhang Z."/>
            <person name="Bao J."/>
            <person name="Han Y."/>
            <person name="Dong L."/>
            <person name="Ji J."/>
            <person name="Chen P."/>
            <person name="Wu S."/>
            <person name="Liu J."/>
            <person name="Xiao Y."/>
            <person name="Bu D."/>
            <person name="Tan J."/>
            <person name="Yang L."/>
            <person name="Ye C."/>
            <person name="Zhang J."/>
            <person name="Xu J."/>
            <person name="Zhou Y."/>
            <person name="Yu Y."/>
            <person name="Zhang B."/>
            <person name="Zhuang S."/>
            <person name="Wei H."/>
            <person name="Liu B."/>
            <person name="Lei M."/>
            <person name="Yu H."/>
            <person name="Li Y."/>
            <person name="Xu H."/>
            <person name="Wei S."/>
            <person name="He X."/>
            <person name="Fang L."/>
            <person name="Zhang Z."/>
            <person name="Zhang Y."/>
            <person name="Huang X."/>
            <person name="Su Z."/>
            <person name="Tong W."/>
            <person name="Li J."/>
            <person name="Tong Z."/>
            <person name="Li S."/>
            <person name="Ye J."/>
            <person name="Wang L."/>
            <person name="Fang L."/>
            <person name="Lei T."/>
            <person name="Chen C.-S."/>
            <person name="Chen H.-C."/>
            <person name="Xu Z."/>
            <person name="Li H."/>
            <person name="Huang H."/>
            <person name="Zhang F."/>
            <person name="Xu H."/>
            <person name="Li N."/>
            <person name="Zhao C."/>
            <person name="Li S."/>
            <person name="Dong L."/>
            <person name="Huang Y."/>
            <person name="Li L."/>
            <person name="Xi Y."/>
            <person name="Qi Q."/>
            <person name="Li W."/>
            <person name="Zhang B."/>
            <person name="Hu W."/>
            <person name="Zhang Y."/>
            <person name="Tian X."/>
            <person name="Jiao Y."/>
            <person name="Liang X."/>
            <person name="Jin J."/>
            <person name="Gao L."/>
            <person name="Zheng W."/>
            <person name="Hao B."/>
            <person name="Liu S.-M."/>
            <person name="Wang W."/>
            <person name="Yuan L."/>
            <person name="Cao M."/>
            <person name="McDermott J."/>
            <person name="Samudrala R."/>
            <person name="Wang J."/>
            <person name="Wong G.K.-S."/>
            <person name="Yang H."/>
        </authorList>
    </citation>
    <scope>NUCLEOTIDE SEQUENCE [LARGE SCALE GENOMIC DNA]</scope>
    <source>
        <strain>cv. Nipponbare</strain>
    </source>
</reference>
<reference key="6">
    <citation type="journal article" date="2003" name="Science">
        <title>Collection, mapping, and annotation of over 28,000 cDNA clones from japonica rice.</title>
        <authorList>
            <consortium name="The rice full-length cDNA consortium"/>
        </authorList>
    </citation>
    <scope>NUCLEOTIDE SEQUENCE [LARGE SCALE MRNA]</scope>
    <source>
        <strain>cv. Nipponbare</strain>
    </source>
</reference>
<gene>
    <name evidence="2" type="primary">PURA2</name>
    <name type="ordered locus">Os03g0699300</name>
    <name type="ordered locus">LOC_Os03g49220</name>
    <name type="ORF">OsJ_12227</name>
    <name type="ORF">OSJNBb0017F17.14</name>
</gene>
<dbReference type="EC" id="6.3.4.4" evidence="2"/>
<dbReference type="EMBL" id="AC097368">
    <property type="protein sequence ID" value="AAO38451.1"/>
    <property type="molecule type" value="Genomic_DNA"/>
</dbReference>
<dbReference type="EMBL" id="DP000009">
    <property type="protein sequence ID" value="ABF98377.1"/>
    <property type="molecule type" value="Genomic_DNA"/>
</dbReference>
<dbReference type="EMBL" id="DP000009">
    <property type="protein sequence ID" value="ABF98378.1"/>
    <property type="status" value="ALT_SEQ"/>
    <property type="molecule type" value="Genomic_DNA"/>
</dbReference>
<dbReference type="EMBL" id="AP008209">
    <property type="protein sequence ID" value="BAF12901.1"/>
    <property type="molecule type" value="Genomic_DNA"/>
</dbReference>
<dbReference type="EMBL" id="AP014959">
    <property type="protein sequence ID" value="BAS85904.1"/>
    <property type="molecule type" value="Genomic_DNA"/>
</dbReference>
<dbReference type="EMBL" id="CM000140">
    <property type="protein sequence ID" value="EAZ28255.1"/>
    <property type="status" value="ALT_SEQ"/>
    <property type="molecule type" value="Genomic_DNA"/>
</dbReference>
<dbReference type="EMBL" id="AK120407">
    <property type="protein sequence ID" value="BAG99996.1"/>
    <property type="molecule type" value="mRNA"/>
</dbReference>
<dbReference type="RefSeq" id="XP_015631172.1">
    <property type="nucleotide sequence ID" value="XM_015775686.1"/>
</dbReference>
<dbReference type="SMR" id="Q851S8"/>
<dbReference type="FunCoup" id="Q851S8">
    <property type="interactions" value="2583"/>
</dbReference>
<dbReference type="STRING" id="39947.Q851S8"/>
<dbReference type="PaxDb" id="39947-Q851S8"/>
<dbReference type="EnsemblPlants" id="Os03t0699300-01">
    <property type="protein sequence ID" value="Os03t0699300-01"/>
    <property type="gene ID" value="Os03g0699300"/>
</dbReference>
<dbReference type="Gramene" id="Os03t0699300-01">
    <property type="protein sequence ID" value="Os03t0699300-01"/>
    <property type="gene ID" value="Os03g0699300"/>
</dbReference>
<dbReference type="KEGG" id="dosa:Os03g0699300"/>
<dbReference type="eggNOG" id="KOG1355">
    <property type="taxonomic scope" value="Eukaryota"/>
</dbReference>
<dbReference type="HOGENOM" id="CLU_029848_0_0_1"/>
<dbReference type="InParanoid" id="Q851S8"/>
<dbReference type="OMA" id="QSYVRFL"/>
<dbReference type="OrthoDB" id="10265645at2759"/>
<dbReference type="UniPathway" id="UPA00075">
    <property type="reaction ID" value="UER00335"/>
</dbReference>
<dbReference type="Proteomes" id="UP000000763">
    <property type="component" value="Chromosome 3"/>
</dbReference>
<dbReference type="Proteomes" id="UP000007752">
    <property type="component" value="Chromosome 3"/>
</dbReference>
<dbReference type="Proteomes" id="UP000059680">
    <property type="component" value="Chromosome 3"/>
</dbReference>
<dbReference type="GO" id="GO:0009507">
    <property type="term" value="C:chloroplast"/>
    <property type="evidence" value="ECO:0007669"/>
    <property type="project" value="UniProtKB-SubCell"/>
</dbReference>
<dbReference type="GO" id="GO:0005737">
    <property type="term" value="C:cytoplasm"/>
    <property type="evidence" value="ECO:0000318"/>
    <property type="project" value="GO_Central"/>
</dbReference>
<dbReference type="GO" id="GO:0004019">
    <property type="term" value="F:adenylosuccinate synthase activity"/>
    <property type="evidence" value="ECO:0000318"/>
    <property type="project" value="GO_Central"/>
</dbReference>
<dbReference type="GO" id="GO:0005525">
    <property type="term" value="F:GTP binding"/>
    <property type="evidence" value="ECO:0007669"/>
    <property type="project" value="UniProtKB-UniRule"/>
</dbReference>
<dbReference type="GO" id="GO:0000287">
    <property type="term" value="F:magnesium ion binding"/>
    <property type="evidence" value="ECO:0007669"/>
    <property type="project" value="UniProtKB-UniRule"/>
</dbReference>
<dbReference type="GO" id="GO:0044208">
    <property type="term" value="P:'de novo' AMP biosynthetic process"/>
    <property type="evidence" value="ECO:0000318"/>
    <property type="project" value="GO_Central"/>
</dbReference>
<dbReference type="GO" id="GO:0046040">
    <property type="term" value="P:IMP metabolic process"/>
    <property type="evidence" value="ECO:0000318"/>
    <property type="project" value="GO_Central"/>
</dbReference>
<dbReference type="CDD" id="cd03108">
    <property type="entry name" value="AdSS"/>
    <property type="match status" value="1"/>
</dbReference>
<dbReference type="FunFam" id="3.90.170.10:FF:000001">
    <property type="entry name" value="Adenylosuccinate synthetase"/>
    <property type="match status" value="1"/>
</dbReference>
<dbReference type="FunFam" id="1.10.300.10:FF:000002">
    <property type="entry name" value="Adenylosuccinate synthetase, chloroplastic"/>
    <property type="match status" value="1"/>
</dbReference>
<dbReference type="Gene3D" id="3.40.440.10">
    <property type="entry name" value="Adenylosuccinate Synthetase, subunit A, domain 1"/>
    <property type="match status" value="1"/>
</dbReference>
<dbReference type="Gene3D" id="1.10.300.10">
    <property type="entry name" value="Adenylosuccinate Synthetase, subunit A, domain 2"/>
    <property type="match status" value="1"/>
</dbReference>
<dbReference type="Gene3D" id="3.90.170.10">
    <property type="entry name" value="Adenylosuccinate Synthetase, subunit A, domain 3"/>
    <property type="match status" value="1"/>
</dbReference>
<dbReference type="HAMAP" id="MF_00011">
    <property type="entry name" value="Adenylosucc_synth"/>
    <property type="match status" value="1"/>
</dbReference>
<dbReference type="InterPro" id="IPR018220">
    <property type="entry name" value="Adenylosuccin_syn_GTP-bd"/>
</dbReference>
<dbReference type="InterPro" id="IPR033128">
    <property type="entry name" value="Adenylosuccin_syn_Lys_AS"/>
</dbReference>
<dbReference type="InterPro" id="IPR042109">
    <property type="entry name" value="Adenylosuccinate_synth_dom1"/>
</dbReference>
<dbReference type="InterPro" id="IPR042110">
    <property type="entry name" value="Adenylosuccinate_synth_dom2"/>
</dbReference>
<dbReference type="InterPro" id="IPR042111">
    <property type="entry name" value="Adenylosuccinate_synth_dom3"/>
</dbReference>
<dbReference type="InterPro" id="IPR001114">
    <property type="entry name" value="Adenylosuccinate_synthetase"/>
</dbReference>
<dbReference type="InterPro" id="IPR027417">
    <property type="entry name" value="P-loop_NTPase"/>
</dbReference>
<dbReference type="NCBIfam" id="NF002223">
    <property type="entry name" value="PRK01117.1"/>
    <property type="match status" value="1"/>
</dbReference>
<dbReference type="NCBIfam" id="TIGR00184">
    <property type="entry name" value="purA"/>
    <property type="match status" value="1"/>
</dbReference>
<dbReference type="PANTHER" id="PTHR11846">
    <property type="entry name" value="ADENYLOSUCCINATE SYNTHETASE"/>
    <property type="match status" value="1"/>
</dbReference>
<dbReference type="PANTHER" id="PTHR11846:SF0">
    <property type="entry name" value="ADENYLOSUCCINATE SYNTHETASE"/>
    <property type="match status" value="1"/>
</dbReference>
<dbReference type="Pfam" id="PF00709">
    <property type="entry name" value="Adenylsucc_synt"/>
    <property type="match status" value="1"/>
</dbReference>
<dbReference type="SMART" id="SM00788">
    <property type="entry name" value="Adenylsucc_synt"/>
    <property type="match status" value="1"/>
</dbReference>
<dbReference type="SUPFAM" id="SSF52540">
    <property type="entry name" value="P-loop containing nucleoside triphosphate hydrolases"/>
    <property type="match status" value="1"/>
</dbReference>
<dbReference type="PROSITE" id="PS01266">
    <property type="entry name" value="ADENYLOSUCCIN_SYN_1"/>
    <property type="match status" value="1"/>
</dbReference>
<dbReference type="PROSITE" id="PS00513">
    <property type="entry name" value="ADENYLOSUCCIN_SYN_2"/>
    <property type="match status" value="1"/>
</dbReference>
<keyword id="KW-0150">Chloroplast</keyword>
<keyword id="KW-0342">GTP-binding</keyword>
<keyword id="KW-0436">Ligase</keyword>
<keyword id="KW-0460">Magnesium</keyword>
<keyword id="KW-0479">Metal-binding</keyword>
<keyword id="KW-0547">Nucleotide-binding</keyword>
<keyword id="KW-0934">Plastid</keyword>
<keyword id="KW-0658">Purine biosynthesis</keyword>
<keyword id="KW-1185">Reference proteome</keyword>
<keyword id="KW-0809">Transit peptide</keyword>
<feature type="transit peptide" description="Chloroplast" evidence="2">
    <location>
        <begin position="1"/>
        <end position="45"/>
    </location>
</feature>
<feature type="chain" id="PRO_0000399278" description="Adenylosuccinate synthetase 2, chloroplastic">
    <location>
        <begin position="46"/>
        <end position="489"/>
    </location>
</feature>
<feature type="active site" description="Proton acceptor" evidence="2">
    <location>
        <position position="77"/>
    </location>
</feature>
<feature type="active site" description="Proton donor" evidence="2">
    <location>
        <position position="105"/>
    </location>
</feature>
<feature type="binding site" evidence="2">
    <location>
        <begin position="76"/>
        <end position="82"/>
    </location>
    <ligand>
        <name>GTP</name>
        <dbReference type="ChEBI" id="CHEBI:37565"/>
    </ligand>
</feature>
<feature type="binding site" description="in other chain" evidence="2">
    <location>
        <begin position="77"/>
        <end position="80"/>
    </location>
    <ligand>
        <name>IMP</name>
        <dbReference type="ChEBI" id="CHEBI:58053"/>
        <note>ligand shared between dimeric partners</note>
    </ligand>
</feature>
<feature type="binding site" evidence="2">
    <location>
        <position position="77"/>
    </location>
    <ligand>
        <name>Mg(2+)</name>
        <dbReference type="ChEBI" id="CHEBI:18420"/>
    </ligand>
</feature>
<feature type="binding site" description="in other chain" evidence="2">
    <location>
        <begin position="102"/>
        <end position="105"/>
    </location>
    <ligand>
        <name>IMP</name>
        <dbReference type="ChEBI" id="CHEBI:58053"/>
        <note>ligand shared between dimeric partners</note>
    </ligand>
</feature>
<feature type="binding site" evidence="2">
    <location>
        <begin position="104"/>
        <end position="106"/>
    </location>
    <ligand>
        <name>GTP</name>
        <dbReference type="ChEBI" id="CHEBI:37565"/>
    </ligand>
</feature>
<feature type="binding site" evidence="2">
    <location>
        <position position="104"/>
    </location>
    <ligand>
        <name>Mg(2+)</name>
        <dbReference type="ChEBI" id="CHEBI:18420"/>
    </ligand>
</feature>
<feature type="binding site" description="in other chain" evidence="2">
    <location>
        <position position="194"/>
    </location>
    <ligand>
        <name>IMP</name>
        <dbReference type="ChEBI" id="CHEBI:58053"/>
        <note>ligand shared between dimeric partners</note>
    </ligand>
</feature>
<feature type="binding site" evidence="2">
    <location>
        <position position="208"/>
    </location>
    <ligand>
        <name>IMP</name>
        <dbReference type="ChEBI" id="CHEBI:58053"/>
        <note>ligand shared between dimeric partners</note>
    </ligand>
</feature>
<feature type="binding site" description="in other chain" evidence="2">
    <location>
        <position position="288"/>
    </location>
    <ligand>
        <name>IMP</name>
        <dbReference type="ChEBI" id="CHEBI:58053"/>
        <note>ligand shared between dimeric partners</note>
    </ligand>
</feature>
<feature type="binding site" description="in other chain" evidence="2">
    <location>
        <position position="303"/>
    </location>
    <ligand>
        <name>IMP</name>
        <dbReference type="ChEBI" id="CHEBI:58053"/>
        <note>ligand shared between dimeric partners</note>
    </ligand>
</feature>
<feature type="binding site" evidence="2">
    <location>
        <begin position="363"/>
        <end position="369"/>
    </location>
    <ligand>
        <name>substrate</name>
    </ligand>
</feature>
<feature type="binding site" description="in other chain" evidence="2">
    <location>
        <position position="367"/>
    </location>
    <ligand>
        <name>IMP</name>
        <dbReference type="ChEBI" id="CHEBI:58053"/>
        <note>ligand shared between dimeric partners</note>
    </ligand>
</feature>
<feature type="binding site" evidence="2">
    <location>
        <position position="369"/>
    </location>
    <ligand>
        <name>GTP</name>
        <dbReference type="ChEBI" id="CHEBI:37565"/>
    </ligand>
</feature>
<feature type="binding site" evidence="2">
    <location>
        <begin position="395"/>
        <end position="397"/>
    </location>
    <ligand>
        <name>GTP</name>
        <dbReference type="ChEBI" id="CHEBI:37565"/>
    </ligand>
</feature>
<feature type="binding site" evidence="2">
    <location>
        <begin position="478"/>
        <end position="480"/>
    </location>
    <ligand>
        <name>GTP</name>
        <dbReference type="ChEBI" id="CHEBI:37565"/>
    </ligand>
</feature>
<proteinExistence type="evidence at transcript level"/>
<sequence>MPFSPPCLDPAAAAAASLSFLPAAAARPPAPCAVAPRSRRALRVAASVATAPESAAAQGRLESLSQVAGVLGTQWGDEGKGKLVDILAQRFDIVARCQGGANAGHTIYNSEGKKFSLHLVPSGILNEKTMCVVGNGAVVHLPGFFKEIDGLESNGISCEGRILVSDRAHLLFDFHQTVDGLREVELGNSLIGTTKRGIGPCYSNKVIRNGLRVSDLRHMDTFGAKLNTLLRDAALRFEGFEYSTKTLKEEVEKYEKFAERLGPYITDTVHFMNQSILQNKKILVEGGQATMLDIDFGTYPFVTSSSPSAGGICTGLGIAPRSIGDLIGVVKAYTTRVGSGPFPTELLGKTGDLLRASGMEFGTTTGRPRRCGWLDIVALKYCCQINGFSSLNLTKLDVLTGLKEVKLGIAYCTEDGKEIESFPADLDLLEKIKVKYEVLPGWEDDISSVRNYSDLPETARLYVERIEELVGIPVHYIGVGPGRDALIYK</sequence>
<comment type="function">
    <text evidence="1">Plays an important role in the de novo pathway and in the salvage pathway of purine nucleotide biosynthesis. Catalyzes the first committed step in the biosynthesis of AMP from IMP (By similarity).</text>
</comment>
<comment type="catalytic activity">
    <reaction evidence="2">
        <text>IMP + L-aspartate + GTP = N(6)-(1,2-dicarboxyethyl)-AMP + GDP + phosphate + 2 H(+)</text>
        <dbReference type="Rhea" id="RHEA:15753"/>
        <dbReference type="ChEBI" id="CHEBI:15378"/>
        <dbReference type="ChEBI" id="CHEBI:29991"/>
        <dbReference type="ChEBI" id="CHEBI:37565"/>
        <dbReference type="ChEBI" id="CHEBI:43474"/>
        <dbReference type="ChEBI" id="CHEBI:57567"/>
        <dbReference type="ChEBI" id="CHEBI:58053"/>
        <dbReference type="ChEBI" id="CHEBI:58189"/>
        <dbReference type="EC" id="6.3.4.4"/>
    </reaction>
</comment>
<comment type="cofactor">
    <cofactor evidence="2">
        <name>Mg(2+)</name>
        <dbReference type="ChEBI" id="CHEBI:18420"/>
    </cofactor>
    <text evidence="2">Binds 1 Mg(2+) ion per subunit.</text>
</comment>
<comment type="pathway">
    <text evidence="2">Purine metabolism; AMP biosynthesis via de novo pathway; AMP from IMP: step 1/2.</text>
</comment>
<comment type="subunit">
    <text evidence="2">Homodimer.</text>
</comment>
<comment type="subcellular location">
    <subcellularLocation>
        <location evidence="2">Plastid</location>
        <location evidence="2">Chloroplast</location>
    </subcellularLocation>
</comment>
<comment type="similarity">
    <text evidence="2">Belongs to the adenylosuccinate synthetase family.</text>
</comment>
<comment type="sequence caution" evidence="3">
    <conflict type="erroneous gene model prediction">
        <sequence resource="EMBL-CDS" id="ABF98378"/>
    </conflict>
</comment>
<comment type="sequence caution" evidence="3">
    <conflict type="erroneous gene model prediction">
        <sequence resource="EMBL-CDS" id="EAZ28255"/>
    </conflict>
</comment>
<evidence type="ECO:0000250" key="1"/>
<evidence type="ECO:0000255" key="2">
    <source>
        <dbReference type="HAMAP-Rule" id="MF_03125"/>
    </source>
</evidence>
<evidence type="ECO:0000305" key="3"/>
<name>PURA2_ORYSJ</name>
<protein>
    <recommendedName>
        <fullName evidence="2">Adenylosuccinate synthetase 2, chloroplastic</fullName>
        <shortName evidence="2">AMPSase 2</shortName>
        <shortName evidence="2">AdSS 2</shortName>
        <ecNumber evidence="2">6.3.4.4</ecNumber>
    </recommendedName>
    <alternativeName>
        <fullName evidence="2">IMP--aspartate ligase 2</fullName>
    </alternativeName>
</protein>